<name>STS18_POSPM</name>
<comment type="function">
    <text evidence="4">Terpene cyclase that catalyzes the cyclization of farnesyl diphosphate (FPP) to delta(6)-protoilludene.</text>
</comment>
<comment type="catalytic activity">
    <reaction evidence="4">
        <text>(2E,6E)-farnesyl diphosphate = Delta(6)-protoilludene + diphosphate</text>
        <dbReference type="Rhea" id="RHEA:34695"/>
        <dbReference type="ChEBI" id="CHEBI:33019"/>
        <dbReference type="ChEBI" id="CHEBI:68655"/>
        <dbReference type="ChEBI" id="CHEBI:175763"/>
        <dbReference type="EC" id="4.2.3.135"/>
    </reaction>
    <physiologicalReaction direction="left-to-right" evidence="4">
        <dbReference type="Rhea" id="RHEA:34696"/>
    </physiologicalReaction>
</comment>
<comment type="cofactor">
    <cofactor evidence="2">
        <name>Mg(2+)</name>
        <dbReference type="ChEBI" id="CHEBI:18420"/>
    </cofactor>
</comment>
<comment type="domain">
    <text evidence="7">The conserved DDXXD and NSE/DTE motifs are important for the catalytic activity, presumably through binding to Mg(2+).</text>
</comment>
<comment type="similarity">
    <text evidence="6">Belongs to the terpene synthase family.</text>
</comment>
<feature type="chain" id="PRO_0000451394" description="Delta(6)-protoilludene synthase 18">
    <location>
        <begin position="1"/>
        <end position="348"/>
    </location>
</feature>
<feature type="short sequence motif" description="DDXXD motif" evidence="7">
    <location>
        <begin position="87"/>
        <end position="91"/>
    </location>
</feature>
<feature type="short sequence motif" description="NSE/DTE motif" evidence="7">
    <location>
        <begin position="223"/>
        <end position="231"/>
    </location>
</feature>
<feature type="binding site" evidence="3">
    <location>
        <position position="87"/>
    </location>
    <ligand>
        <name>Mg(2+)</name>
        <dbReference type="ChEBI" id="CHEBI:18420"/>
        <label>1</label>
    </ligand>
</feature>
<feature type="binding site" evidence="3">
    <location>
        <position position="87"/>
    </location>
    <ligand>
        <name>Mg(2+)</name>
        <dbReference type="ChEBI" id="CHEBI:18420"/>
        <label>2</label>
    </ligand>
</feature>
<feature type="binding site" evidence="3">
    <location>
        <position position="223"/>
    </location>
    <ligand>
        <name>Mg(2+)</name>
        <dbReference type="ChEBI" id="CHEBI:18420"/>
        <label>3</label>
    </ligand>
</feature>
<feature type="binding site" evidence="3">
    <location>
        <position position="227"/>
    </location>
    <ligand>
        <name>Mg(2+)</name>
        <dbReference type="ChEBI" id="CHEBI:18420"/>
        <label>3</label>
    </ligand>
</feature>
<feature type="binding site" evidence="3">
    <location>
        <position position="231"/>
    </location>
    <ligand>
        <name>Mg(2+)</name>
        <dbReference type="ChEBI" id="CHEBI:18420"/>
        <label>3</label>
    </ligand>
</feature>
<feature type="binding site" evidence="3">
    <location>
        <position position="311"/>
    </location>
    <ligand>
        <name>(2E,6E)-farnesyl diphosphate</name>
        <dbReference type="ChEBI" id="CHEBI:175763"/>
    </ligand>
</feature>
<feature type="binding site" evidence="3">
    <location>
        <position position="312"/>
    </location>
    <ligand>
        <name>(2E,6E)-farnesyl diphosphate</name>
        <dbReference type="ChEBI" id="CHEBI:175763"/>
    </ligand>
</feature>
<feature type="site" description="Plays a critical role in the stabilization of intermediate cation" evidence="1">
    <location>
        <position position="84"/>
    </location>
</feature>
<gene>
    <name evidence="5" type="primary">STS-18</name>
</gene>
<dbReference type="EC" id="4.2.3.135" evidence="4"/>
<dbReference type="EMBL" id="LC378436">
    <property type="protein sequence ID" value="BBD74528.1"/>
    <property type="molecule type" value="mRNA"/>
</dbReference>
<dbReference type="SMR" id="A0A348B790"/>
<dbReference type="GO" id="GO:0046872">
    <property type="term" value="F:metal ion binding"/>
    <property type="evidence" value="ECO:0007669"/>
    <property type="project" value="UniProtKB-KW"/>
</dbReference>
<dbReference type="GO" id="GO:0010333">
    <property type="term" value="F:terpene synthase activity"/>
    <property type="evidence" value="ECO:0007669"/>
    <property type="project" value="InterPro"/>
</dbReference>
<dbReference type="GO" id="GO:0008299">
    <property type="term" value="P:isoprenoid biosynthetic process"/>
    <property type="evidence" value="ECO:0007669"/>
    <property type="project" value="UniProtKB-ARBA"/>
</dbReference>
<dbReference type="Gene3D" id="1.10.600.10">
    <property type="entry name" value="Farnesyl Diphosphate Synthase"/>
    <property type="match status" value="1"/>
</dbReference>
<dbReference type="InterPro" id="IPR008949">
    <property type="entry name" value="Isoprenoid_synthase_dom_sf"/>
</dbReference>
<dbReference type="InterPro" id="IPR034686">
    <property type="entry name" value="Terpene_cyclase-like_2"/>
</dbReference>
<dbReference type="PANTHER" id="PTHR35201:SF4">
    <property type="entry name" value="BETA-PINACENE SYNTHASE-RELATED"/>
    <property type="match status" value="1"/>
</dbReference>
<dbReference type="PANTHER" id="PTHR35201">
    <property type="entry name" value="TERPENE SYNTHASE"/>
    <property type="match status" value="1"/>
</dbReference>
<dbReference type="Pfam" id="PF19086">
    <property type="entry name" value="Terpene_syn_C_2"/>
    <property type="match status" value="1"/>
</dbReference>
<dbReference type="SFLD" id="SFLDS00005">
    <property type="entry name" value="Isoprenoid_Synthase_Type_I"/>
    <property type="match status" value="1"/>
</dbReference>
<dbReference type="SFLD" id="SFLDG01020">
    <property type="entry name" value="Terpene_Cyclase_Like_2"/>
    <property type="match status" value="1"/>
</dbReference>
<dbReference type="SUPFAM" id="SSF48576">
    <property type="entry name" value="Terpenoid synthases"/>
    <property type="match status" value="1"/>
</dbReference>
<reference key="1">
    <citation type="journal article" date="2018" name="Microb. Biotechnol.">
        <title>Insight into metabolic diversity of the brown-rot basidiomycete Postia placenta responsible for sesquiterpene biosynthesis: semi-comprehensive screening of cytochrome P450 monooxygenase involved in protoilludene metabolism.</title>
        <authorList>
            <person name="Ichinose H."/>
            <person name="Kitaoka T."/>
        </authorList>
    </citation>
    <scope>NUCLEOTIDE SEQUENCE [MRNA]</scope>
    <scope>FUNCTION</scope>
    <scope>DOMAIN</scope>
    <scope>CATALYTIC ACTIVITY</scope>
    <source>
        <strain>ATCC 44394 / Madison 698-R</strain>
    </source>
</reference>
<evidence type="ECO:0000250" key="1">
    <source>
        <dbReference type="UniProtKB" id="B5HDJ6"/>
    </source>
</evidence>
<evidence type="ECO:0000250" key="2">
    <source>
        <dbReference type="UniProtKB" id="I3ZNU9"/>
    </source>
</evidence>
<evidence type="ECO:0000250" key="3">
    <source>
        <dbReference type="UniProtKB" id="Q9UR08"/>
    </source>
</evidence>
<evidence type="ECO:0000269" key="4">
    <source>
    </source>
</evidence>
<evidence type="ECO:0000303" key="5">
    <source>
    </source>
</evidence>
<evidence type="ECO:0000305" key="6"/>
<evidence type="ECO:0000305" key="7">
    <source>
    </source>
</evidence>
<organism>
    <name type="scientific">Postia placenta (strain ATCC 44394 / Madison 698-R)</name>
    <name type="common">Brown rot fungus</name>
    <name type="synonym">Poria monticola</name>
    <dbReference type="NCBI Taxonomy" id="561896"/>
    <lineage>
        <taxon>Eukaryota</taxon>
        <taxon>Fungi</taxon>
        <taxon>Dikarya</taxon>
        <taxon>Basidiomycota</taxon>
        <taxon>Agaricomycotina</taxon>
        <taxon>Agaricomycetes</taxon>
        <taxon>Polyporales</taxon>
        <taxon>Adustoporiaceae</taxon>
        <taxon>Rhodonia</taxon>
    </lineage>
</organism>
<proteinExistence type="evidence at protein level"/>
<accession>A0A348B790</accession>
<protein>
    <recommendedName>
        <fullName evidence="5">Delta(6)-protoilludene synthase 18</fullName>
        <ecNumber evidence="4">4.2.3.135</ecNumber>
    </recommendedName>
    <alternativeName>
        <fullName evidence="5">Terpene cyclase 18</fullName>
    </alternativeName>
</protein>
<sequence length="348" mass="40000">MPSAIPMLYLPDTMSAWPWQRAINPYFNEVKAASNSWFKSFRAFSPASQKAFDKCDFCLLAALAYPRARKEHLRTGCDLMNLFFVIDEYTDVEDANVCRDMVDIVIDALRRPHDPRPEGEVVLGEIARQFWARAIETASPTSQRRFLETFIAYLESVVLQAADRDCDAEHTVQTYLAQRRDNIGSYPSYAVLELALDIPDDVFYHPAMNELSLYATEMLIIDNDLVSYNREQASGDTNNILFVIMRQFNCSLDHAMAWAAAYHSQLEARFMDAFKRMPSWGLEIDSQVEEYCQGIANWPRGNDCWSFESGRYFGDKGREVQKTRCVPLLPKKERDTSLRQQDVVITSL</sequence>
<keyword id="KW-0456">Lyase</keyword>
<keyword id="KW-0460">Magnesium</keyword>
<keyword id="KW-0479">Metal-binding</keyword>